<organism>
    <name type="scientific">Chlorocebus aethiops</name>
    <name type="common">Green monkey</name>
    <name type="synonym">Cercopithecus aethiops</name>
    <dbReference type="NCBI Taxonomy" id="9534"/>
    <lineage>
        <taxon>Eukaryota</taxon>
        <taxon>Metazoa</taxon>
        <taxon>Chordata</taxon>
        <taxon>Craniata</taxon>
        <taxon>Vertebrata</taxon>
        <taxon>Euteleostomi</taxon>
        <taxon>Mammalia</taxon>
        <taxon>Eutheria</taxon>
        <taxon>Euarchontoglires</taxon>
        <taxon>Primates</taxon>
        <taxon>Haplorrhini</taxon>
        <taxon>Catarrhini</taxon>
        <taxon>Cercopithecidae</taxon>
        <taxon>Cercopithecinae</taxon>
        <taxon>Chlorocebus</taxon>
    </lineage>
</organism>
<comment type="function">
    <text>Involved in oxygen transport from the lung to the various peripheral tissues.</text>
</comment>
<comment type="function">
    <molecule>Hemopressin</molecule>
    <text evidence="2">Hemopressin acts as an antagonist peptide of the cannabinoid receptor CNR1. Hemopressin-binding efficiently blocks cannabinoid receptor CNR1 and subsequent signaling.</text>
</comment>
<comment type="subunit">
    <text>Heterotetramer of two alpha chains and two beta chains.</text>
</comment>
<comment type="tissue specificity">
    <text>Red blood cells.</text>
</comment>
<comment type="similarity">
    <text evidence="5">Belongs to the globin family.</text>
</comment>
<evidence type="ECO:0000250" key="1">
    <source>
        <dbReference type="UniProtKB" id="P01942"/>
    </source>
</evidence>
<evidence type="ECO:0000250" key="2">
    <source>
        <dbReference type="UniProtKB" id="P01946"/>
    </source>
</evidence>
<evidence type="ECO:0000250" key="3">
    <source>
        <dbReference type="UniProtKB" id="P18969"/>
    </source>
</evidence>
<evidence type="ECO:0000250" key="4">
    <source>
        <dbReference type="UniProtKB" id="P69905"/>
    </source>
</evidence>
<evidence type="ECO:0000255" key="5">
    <source>
        <dbReference type="PROSITE-ProRule" id="PRU00238"/>
    </source>
</evidence>
<gene>
    <name type="primary">HBA</name>
</gene>
<feature type="initiator methionine" description="Removed" evidence="3">
    <location>
        <position position="1"/>
    </location>
</feature>
<feature type="chain" id="PRO_0000052594" description="Hemoglobin subunit alpha">
    <location>
        <begin position="2"/>
        <end position="142"/>
    </location>
</feature>
<feature type="peptide" id="PRO_0000455854" description="Hemopressin" evidence="2">
    <location>
        <begin position="96"/>
        <end position="104"/>
    </location>
</feature>
<feature type="domain" description="Globin" evidence="5">
    <location>
        <begin position="2"/>
        <end position="142"/>
    </location>
</feature>
<feature type="binding site" evidence="5">
    <location>
        <position position="59"/>
    </location>
    <ligand>
        <name>O2</name>
        <dbReference type="ChEBI" id="CHEBI:15379"/>
    </ligand>
</feature>
<feature type="binding site" description="proximal binding residue" evidence="5">
    <location>
        <position position="88"/>
    </location>
    <ligand>
        <name>heme b</name>
        <dbReference type="ChEBI" id="CHEBI:60344"/>
    </ligand>
    <ligandPart>
        <name>Fe</name>
        <dbReference type="ChEBI" id="CHEBI:18248"/>
    </ligandPart>
</feature>
<feature type="modified residue" description="Phosphoserine" evidence="4">
    <location>
        <position position="4"/>
    </location>
</feature>
<feature type="modified residue" description="N6-succinyllysine" evidence="1">
    <location>
        <position position="8"/>
    </location>
</feature>
<feature type="modified residue" description="N6-succinyllysine" evidence="1">
    <location>
        <position position="12"/>
    </location>
</feature>
<feature type="modified residue" description="N6-acetyllysine; alternate" evidence="4">
    <location>
        <position position="17"/>
    </location>
</feature>
<feature type="modified residue" description="N6-succinyllysine; alternate" evidence="1">
    <location>
        <position position="17"/>
    </location>
</feature>
<feature type="modified residue" description="Phosphotyrosine" evidence="4">
    <location>
        <position position="25"/>
    </location>
</feature>
<feature type="modified residue" description="Phosphoserine" evidence="4">
    <location>
        <position position="36"/>
    </location>
</feature>
<feature type="modified residue" description="N6-succinyllysine" evidence="1">
    <location>
        <position position="41"/>
    </location>
</feature>
<feature type="modified residue" description="Phosphoserine" evidence="4">
    <location>
        <position position="50"/>
    </location>
</feature>
<feature type="modified residue" description="Phosphoserine" evidence="1">
    <location>
        <position position="103"/>
    </location>
</feature>
<feature type="modified residue" description="Phosphothreonine" evidence="1">
    <location>
        <position position="109"/>
    </location>
</feature>
<feature type="modified residue" description="Phosphoserine" evidence="1">
    <location>
        <position position="125"/>
    </location>
</feature>
<feature type="modified residue" description="Phosphoserine" evidence="1">
    <location>
        <position position="132"/>
    </location>
</feature>
<feature type="modified residue" description="Phosphothreonine" evidence="1">
    <location>
        <position position="135"/>
    </location>
</feature>
<feature type="modified residue" description="Phosphothreonine" evidence="1">
    <location>
        <position position="138"/>
    </location>
</feature>
<feature type="modified residue" description="Phosphoserine" evidence="1">
    <location>
        <position position="139"/>
    </location>
</feature>
<name>HBA_CHLAE</name>
<keyword id="KW-0007">Acetylation</keyword>
<keyword id="KW-0903">Direct protein sequencing</keyword>
<keyword id="KW-0349">Heme</keyword>
<keyword id="KW-0408">Iron</keyword>
<keyword id="KW-0479">Metal-binding</keyword>
<keyword id="KW-0561">Oxygen transport</keyword>
<keyword id="KW-0597">Phosphoprotein</keyword>
<keyword id="KW-0813">Transport</keyword>
<dbReference type="PIR" id="A02252">
    <property type="entry name" value="HAMQC"/>
</dbReference>
<dbReference type="BMRB" id="P01926"/>
<dbReference type="SMR" id="P01926"/>
<dbReference type="GO" id="GO:0072562">
    <property type="term" value="C:blood microparticle"/>
    <property type="evidence" value="ECO:0007669"/>
    <property type="project" value="TreeGrafter"/>
</dbReference>
<dbReference type="GO" id="GO:0031838">
    <property type="term" value="C:haptoglobin-hemoglobin complex"/>
    <property type="evidence" value="ECO:0007669"/>
    <property type="project" value="TreeGrafter"/>
</dbReference>
<dbReference type="GO" id="GO:0005833">
    <property type="term" value="C:hemoglobin complex"/>
    <property type="evidence" value="ECO:0007669"/>
    <property type="project" value="InterPro"/>
</dbReference>
<dbReference type="GO" id="GO:0031720">
    <property type="term" value="F:haptoglobin binding"/>
    <property type="evidence" value="ECO:0007669"/>
    <property type="project" value="TreeGrafter"/>
</dbReference>
<dbReference type="GO" id="GO:0020037">
    <property type="term" value="F:heme binding"/>
    <property type="evidence" value="ECO:0007669"/>
    <property type="project" value="InterPro"/>
</dbReference>
<dbReference type="GO" id="GO:0005506">
    <property type="term" value="F:iron ion binding"/>
    <property type="evidence" value="ECO:0007669"/>
    <property type="project" value="InterPro"/>
</dbReference>
<dbReference type="GO" id="GO:0043177">
    <property type="term" value="F:organic acid binding"/>
    <property type="evidence" value="ECO:0007669"/>
    <property type="project" value="TreeGrafter"/>
</dbReference>
<dbReference type="GO" id="GO:0019825">
    <property type="term" value="F:oxygen binding"/>
    <property type="evidence" value="ECO:0007669"/>
    <property type="project" value="InterPro"/>
</dbReference>
<dbReference type="GO" id="GO:0005344">
    <property type="term" value="F:oxygen carrier activity"/>
    <property type="evidence" value="ECO:0007669"/>
    <property type="project" value="UniProtKB-KW"/>
</dbReference>
<dbReference type="GO" id="GO:0004601">
    <property type="term" value="F:peroxidase activity"/>
    <property type="evidence" value="ECO:0007669"/>
    <property type="project" value="TreeGrafter"/>
</dbReference>
<dbReference type="GO" id="GO:0042744">
    <property type="term" value="P:hydrogen peroxide catabolic process"/>
    <property type="evidence" value="ECO:0007669"/>
    <property type="project" value="TreeGrafter"/>
</dbReference>
<dbReference type="CDD" id="cd08927">
    <property type="entry name" value="Hb-alpha-like"/>
    <property type="match status" value="1"/>
</dbReference>
<dbReference type="FunFam" id="1.10.490.10:FF:000002">
    <property type="entry name" value="Hemoglobin subunit alpha"/>
    <property type="match status" value="1"/>
</dbReference>
<dbReference type="Gene3D" id="1.10.490.10">
    <property type="entry name" value="Globins"/>
    <property type="match status" value="1"/>
</dbReference>
<dbReference type="InterPro" id="IPR000971">
    <property type="entry name" value="Globin"/>
</dbReference>
<dbReference type="InterPro" id="IPR009050">
    <property type="entry name" value="Globin-like_sf"/>
</dbReference>
<dbReference type="InterPro" id="IPR012292">
    <property type="entry name" value="Globin/Proto"/>
</dbReference>
<dbReference type="InterPro" id="IPR002338">
    <property type="entry name" value="Hemoglobin_a-typ"/>
</dbReference>
<dbReference type="InterPro" id="IPR050056">
    <property type="entry name" value="Hemoglobin_oxygen_transport"/>
</dbReference>
<dbReference type="InterPro" id="IPR002339">
    <property type="entry name" value="Hemoglobin_pi"/>
</dbReference>
<dbReference type="PANTHER" id="PTHR11442">
    <property type="entry name" value="HEMOGLOBIN FAMILY MEMBER"/>
    <property type="match status" value="1"/>
</dbReference>
<dbReference type="PANTHER" id="PTHR11442:SF48">
    <property type="entry name" value="HEMOGLOBIN SUBUNIT ALPHA"/>
    <property type="match status" value="1"/>
</dbReference>
<dbReference type="Pfam" id="PF00042">
    <property type="entry name" value="Globin"/>
    <property type="match status" value="1"/>
</dbReference>
<dbReference type="PRINTS" id="PR00612">
    <property type="entry name" value="ALPHAHAEM"/>
</dbReference>
<dbReference type="PRINTS" id="PR00815">
    <property type="entry name" value="PIHAEM"/>
</dbReference>
<dbReference type="SUPFAM" id="SSF46458">
    <property type="entry name" value="Globin-like"/>
    <property type="match status" value="1"/>
</dbReference>
<dbReference type="PROSITE" id="PS01033">
    <property type="entry name" value="GLOBIN"/>
    <property type="match status" value="1"/>
</dbReference>
<reference key="1">
    <citation type="journal article" date="1973" name="Hoppe-Seyler's Z. Physiol. Chem.">
        <title>The amino acid sequences of the alpha and beta polypeptide chains of adult hemoglobin of the savannah monkey (Cereopithecus aethiops).</title>
        <authorList>
            <person name="Matsuda G."/>
            <person name="Maita T."/>
            <person name="Watanabe B."/>
            <person name="Araya A."/>
            <person name="Morokuma K."/>
            <person name="Goodman M."/>
            <person name="Prychodko W."/>
        </authorList>
    </citation>
    <scope>PROTEIN SEQUENCE OF 2-142</scope>
</reference>
<protein>
    <recommendedName>
        <fullName>Hemoglobin subunit alpha</fullName>
    </recommendedName>
    <alternativeName>
        <fullName>Alpha-globin</fullName>
    </alternativeName>
    <alternativeName>
        <fullName>Hemoglobin alpha chain</fullName>
    </alternativeName>
    <component>
        <recommendedName>
            <fullName evidence="2">Hemopressin</fullName>
        </recommendedName>
    </component>
</protein>
<accession>P01926</accession>
<proteinExistence type="evidence at protein level"/>
<sequence length="142" mass="15238">MVLSPADKSNVKAAWGKVGGHAGEYGAEALERMFLSFPTTKTYFPHFDLSHGSAQVKGHGKKVADALTLAVGHVDDMPHALSALSDLHAHKLRVDPVNFKLLSHCLLVTLAAHLPAEFTPAVHASLDKFLASVSTVLTSKYR</sequence>